<protein>
    <recommendedName>
        <fullName>Hemoglobin-1</fullName>
    </recommendedName>
    <alternativeName>
        <fullName>Hemoglobin I</fullName>
        <shortName>Hb I</shortName>
        <shortName>HbI</shortName>
    </alternativeName>
    <alternativeName>
        <fullName>Sulfide-reactive hemoglobin</fullName>
    </alternativeName>
</protein>
<reference key="1">
    <citation type="journal article" date="1999" name="J. Protein Chem.">
        <title>The cDNA-derived amino acid sequence of hemoglobin I from Lucina pectinata.</title>
        <authorList>
            <person name="Antommattei-Perez F.M."/>
            <person name="Rosado-Ruiz T."/>
            <person name="Cadilla C.L."/>
            <person name="Lopez-Garriga J."/>
        </authorList>
    </citation>
    <scope>NUCLEOTIDE SEQUENCE [MRNA]</scope>
</reference>
<reference key="2">
    <citation type="journal article" date="1990" name="J. Biol. Chem.">
        <title>Hemoglobins of the Lucina pectinata/bacteria symbiosis. I. Molecular properties, kinetics and equilibria of reactions with ligands.</title>
        <authorList>
            <person name="Kraus D.W."/>
            <person name="Wittenberg J.B."/>
        </authorList>
    </citation>
    <scope>CHARACTERIZATION</scope>
</reference>
<reference key="3">
    <citation type="journal article" date="1994" name="J. Mol. Biol.">
        <title>Structure of the sulfide-reactive hemoglobin from the clam Lucina pectinata. Crystallographic analysis at 1.5-A resolution.</title>
        <authorList>
            <person name="Rizzi M."/>
            <person name="Wittenberg J.B."/>
            <person name="Coda A."/>
            <person name="Ascenzi P."/>
            <person name="Fasano M."/>
            <person name="Bolognesi M."/>
        </authorList>
    </citation>
    <scope>PARTIAL PROTEIN SEQUENCE</scope>
    <scope>ACETYLATION AT SER-2</scope>
    <scope>X-RAY CRYSTALLOGRAPHY (1.5 ANGSTROMS)</scope>
    <source>
        <tissue>Gill</tissue>
    </source>
</reference>
<reference key="4">
    <citation type="journal article" date="1996" name="J. Mol. Biol.">
        <title>Structural bases for sulfide recognition in Lucina pectinata hemoglobin I.</title>
        <authorList>
            <person name="Rizzi M."/>
            <person name="Wittenberg J.B."/>
            <person name="Coda A."/>
            <person name="Ascenzi P."/>
            <person name="Bolognesi M."/>
        </authorList>
    </citation>
    <scope>X-RAY CRYSTALLOGRAPHY (1.9 ANGSTROMS)</scope>
</reference>
<reference key="5">
    <citation type="journal article" date="1999" name="Biophys. J.">
        <title>Cyanide binding to Lucina pectinata hemoglobin I and to sperm whale myoglobin: an X-ray crystallographic study.</title>
        <authorList>
            <person name="Bolognesi M."/>
            <person name="Rosano C."/>
            <person name="Losso R."/>
            <person name="Borassi A."/>
            <person name="Rizzi M."/>
            <person name="Wittenberg J.B."/>
            <person name="Boffi A."/>
            <person name="Ascenzi P."/>
        </authorList>
    </citation>
    <scope>X-RAY CRYSTALLOGRAPHY (1.43 ANGSTROMS)</scope>
    <scope>SEQUENCE REVISION</scope>
</reference>
<organism>
    <name type="scientific">Phacoides pectinatus</name>
    <name type="common">Thick lucine</name>
    <name type="synonym">Lucina pectinata</name>
    <dbReference type="NCBI Taxonomy" id="244486"/>
    <lineage>
        <taxon>Eukaryota</taxon>
        <taxon>Metazoa</taxon>
        <taxon>Spiralia</taxon>
        <taxon>Lophotrochozoa</taxon>
        <taxon>Mollusca</taxon>
        <taxon>Bivalvia</taxon>
        <taxon>Autobranchia</taxon>
        <taxon>Heteroconchia</taxon>
        <taxon>Euheterodonta</taxon>
        <taxon>Imparidentia</taxon>
        <taxon>Lucinida</taxon>
        <taxon>Lucinoidea</taxon>
        <taxon>Lucinidae</taxon>
        <taxon>Phacoides</taxon>
    </lineage>
</organism>
<dbReference type="EMBL" id="AF187049">
    <property type="protein sequence ID" value="AAG01380.1"/>
    <property type="molecule type" value="mRNA"/>
</dbReference>
<dbReference type="PDB" id="1B0B">
    <property type="method" value="X-ray"/>
    <property type="resolution" value="1.43 A"/>
    <property type="chains" value="A=2-141"/>
</dbReference>
<dbReference type="PDB" id="1EBT">
    <property type="method" value="X-ray"/>
    <property type="resolution" value="1.90 A"/>
    <property type="chains" value="A=2-143"/>
</dbReference>
<dbReference type="PDB" id="1FLP">
    <property type="method" value="X-ray"/>
    <property type="resolution" value="1.50 A"/>
    <property type="chains" value="A=2-143"/>
</dbReference>
<dbReference type="PDB" id="1MOH">
    <property type="method" value="X-ray"/>
    <property type="resolution" value="1.90 A"/>
    <property type="chains" value="A=2-143"/>
</dbReference>
<dbReference type="PDBsum" id="1B0B"/>
<dbReference type="PDBsum" id="1EBT"/>
<dbReference type="PDBsum" id="1FLP"/>
<dbReference type="PDBsum" id="1MOH"/>
<dbReference type="SMR" id="P41260"/>
<dbReference type="iPTMnet" id="P41260"/>
<dbReference type="EvolutionaryTrace" id="P41260"/>
<dbReference type="GO" id="GO:0005576">
    <property type="term" value="C:extracellular region"/>
    <property type="evidence" value="ECO:0007669"/>
    <property type="project" value="InterPro"/>
</dbReference>
<dbReference type="GO" id="GO:0005833">
    <property type="term" value="C:hemoglobin complex"/>
    <property type="evidence" value="ECO:0007669"/>
    <property type="project" value="InterPro"/>
</dbReference>
<dbReference type="GO" id="GO:0020037">
    <property type="term" value="F:heme binding"/>
    <property type="evidence" value="ECO:0007669"/>
    <property type="project" value="InterPro"/>
</dbReference>
<dbReference type="GO" id="GO:0046872">
    <property type="term" value="F:metal ion binding"/>
    <property type="evidence" value="ECO:0007669"/>
    <property type="project" value="UniProtKB-KW"/>
</dbReference>
<dbReference type="GO" id="GO:0019825">
    <property type="term" value="F:oxygen binding"/>
    <property type="evidence" value="ECO:0007669"/>
    <property type="project" value="InterPro"/>
</dbReference>
<dbReference type="GO" id="GO:0015671">
    <property type="term" value="P:oxygen transport"/>
    <property type="evidence" value="ECO:0007669"/>
    <property type="project" value="InterPro"/>
</dbReference>
<dbReference type="CDD" id="cd01040">
    <property type="entry name" value="Mb-like"/>
    <property type="match status" value="1"/>
</dbReference>
<dbReference type="Gene3D" id="1.10.490.10">
    <property type="entry name" value="Globins"/>
    <property type="match status" value="1"/>
</dbReference>
<dbReference type="InterPro" id="IPR002336">
    <property type="entry name" value="Erythrocruorin"/>
</dbReference>
<dbReference type="InterPro" id="IPR000971">
    <property type="entry name" value="Globin"/>
</dbReference>
<dbReference type="InterPro" id="IPR009050">
    <property type="entry name" value="Globin-like_sf"/>
</dbReference>
<dbReference type="InterPro" id="IPR012292">
    <property type="entry name" value="Globin/Proto"/>
</dbReference>
<dbReference type="InterPro" id="IPR044399">
    <property type="entry name" value="Mb-like_M"/>
</dbReference>
<dbReference type="Pfam" id="PF00042">
    <property type="entry name" value="Globin"/>
    <property type="match status" value="1"/>
</dbReference>
<dbReference type="PRINTS" id="PR00611">
    <property type="entry name" value="ERYTHCRUORIN"/>
</dbReference>
<dbReference type="SUPFAM" id="SSF46458">
    <property type="entry name" value="Globin-like"/>
    <property type="match status" value="1"/>
</dbReference>
<dbReference type="PROSITE" id="PS01033">
    <property type="entry name" value="GLOBIN"/>
    <property type="match status" value="1"/>
</dbReference>
<keyword id="KW-0002">3D-structure</keyword>
<keyword id="KW-0007">Acetylation</keyword>
<keyword id="KW-0963">Cytoplasm</keyword>
<keyword id="KW-0903">Direct protein sequencing</keyword>
<keyword id="KW-0349">Heme</keyword>
<keyword id="KW-0408">Iron</keyword>
<keyword id="KW-0479">Metal-binding</keyword>
<keyword id="KW-0813">Transport</keyword>
<comment type="function">
    <text>Serves to transport hydrogen sulfide to autotrophic bacteria.</text>
</comment>
<comment type="subunit">
    <text>Monomer.</text>
</comment>
<comment type="subcellular location">
    <subcellularLocation>
        <location>Cytoplasm</location>
    </subcellularLocation>
</comment>
<comment type="miscellaneous">
    <text>This molluscan globin lacks one of the heme-binding histidine residues found in most other globins.</text>
</comment>
<comment type="similarity">
    <text evidence="1">Belongs to the globin family.</text>
</comment>
<accession>P41260</accession>
<accession>Q9GV87</accession>
<name>GLB1_PHAPT</name>
<sequence>MSLSAAQKDNVKSSWAKASAAWGTAGPEFFMALFDAHDDVFAKFSGLFKGAAKGTVKNTPEMAAQAQSFKGLVSNWVDNLDNAGALEGQCKTFAANHKARGISAGQLEAAFKVLAGFMKSYGGDEGAWTAVAGALMGMIRPNM</sequence>
<feature type="initiator methionine" description="Removed">
    <location>
        <position position="1"/>
    </location>
</feature>
<feature type="chain" id="PRO_0000052492" description="Hemoglobin-1">
    <location>
        <begin position="2"/>
        <end position="143"/>
    </location>
</feature>
<feature type="domain" description="Globin" evidence="1">
    <location>
        <begin position="2"/>
        <end position="143"/>
    </location>
</feature>
<feature type="binding site" description="proximal binding residue">
    <location>
        <position position="97"/>
    </location>
    <ligand>
        <name>heme b</name>
        <dbReference type="ChEBI" id="CHEBI:60344"/>
    </ligand>
    <ligandPart>
        <name>Fe</name>
        <dbReference type="ChEBI" id="CHEBI:18248"/>
    </ligandPart>
</feature>
<feature type="modified residue" description="N-acetylserine" evidence="2">
    <location>
        <position position="2"/>
    </location>
</feature>
<feature type="sequence conflict" description="In Ref. 3; AA sequence." evidence="3" ref="3">
    <original>K</original>
    <variation>S</variation>
    <location>
        <position position="49"/>
    </location>
</feature>
<feature type="helix" evidence="4">
    <location>
        <begin position="5"/>
        <end position="36"/>
    </location>
</feature>
<feature type="helix" evidence="4">
    <location>
        <begin position="38"/>
        <end position="42"/>
    </location>
</feature>
<feature type="turn" evidence="4">
    <location>
        <begin position="43"/>
        <end position="50"/>
    </location>
</feature>
<feature type="helix" evidence="4">
    <location>
        <begin position="53"/>
        <end position="55"/>
    </location>
</feature>
<feature type="helix" evidence="4">
    <location>
        <begin position="60"/>
        <end position="77"/>
    </location>
</feature>
<feature type="turn" evidence="4">
    <location>
        <begin position="78"/>
        <end position="81"/>
    </location>
</feature>
<feature type="helix" evidence="4">
    <location>
        <begin position="83"/>
        <end position="99"/>
    </location>
</feature>
<feature type="helix" evidence="4">
    <location>
        <begin position="104"/>
        <end position="117"/>
    </location>
</feature>
<feature type="helix" evidence="4">
    <location>
        <begin position="118"/>
        <end position="121"/>
    </location>
</feature>
<feature type="helix" evidence="4">
    <location>
        <begin position="125"/>
        <end position="139"/>
    </location>
</feature>
<feature type="helix" evidence="4">
    <location>
        <begin position="140"/>
        <end position="142"/>
    </location>
</feature>
<evidence type="ECO:0000255" key="1">
    <source>
        <dbReference type="PROSITE-ProRule" id="PRU00238"/>
    </source>
</evidence>
<evidence type="ECO:0000269" key="2">
    <source>
    </source>
</evidence>
<evidence type="ECO:0000305" key="3"/>
<evidence type="ECO:0007829" key="4">
    <source>
        <dbReference type="PDB" id="1B0B"/>
    </source>
</evidence>
<proteinExistence type="evidence at protein level"/>